<keyword id="KW-1185">Reference proteome</keyword>
<keyword id="KW-0677">Repeat</keyword>
<keyword id="KW-0853">WD repeat</keyword>
<organism>
    <name type="scientific">Dictyostelium discoideum</name>
    <name type="common">Social amoeba</name>
    <dbReference type="NCBI Taxonomy" id="44689"/>
    <lineage>
        <taxon>Eukaryota</taxon>
        <taxon>Amoebozoa</taxon>
        <taxon>Evosea</taxon>
        <taxon>Eumycetozoa</taxon>
        <taxon>Dictyostelia</taxon>
        <taxon>Dictyosteliales</taxon>
        <taxon>Dictyosteliaceae</taxon>
        <taxon>Dictyostelium</taxon>
    </lineage>
</organism>
<accession>Q55DA2</accession>
<comment type="function">
    <text evidence="1">Essential component of the cytosolic iron-sulfur (Fe/S) protein assembly machinery. Required for the maturation of extramitochondrial Fe/S proteins.</text>
</comment>
<comment type="similarity">
    <text evidence="1">Belongs to the WD repeat CIA1 family.</text>
</comment>
<reference key="1">
    <citation type="journal article" date="2005" name="Nature">
        <title>The genome of the social amoeba Dictyostelium discoideum.</title>
        <authorList>
            <person name="Eichinger L."/>
            <person name="Pachebat J.A."/>
            <person name="Gloeckner G."/>
            <person name="Rajandream M.A."/>
            <person name="Sucgang R."/>
            <person name="Berriman M."/>
            <person name="Song J."/>
            <person name="Olsen R."/>
            <person name="Szafranski K."/>
            <person name="Xu Q."/>
            <person name="Tunggal B."/>
            <person name="Kummerfeld S."/>
            <person name="Madera M."/>
            <person name="Konfortov B.A."/>
            <person name="Rivero F."/>
            <person name="Bankier A.T."/>
            <person name="Lehmann R."/>
            <person name="Hamlin N."/>
            <person name="Davies R."/>
            <person name="Gaudet P."/>
            <person name="Fey P."/>
            <person name="Pilcher K."/>
            <person name="Chen G."/>
            <person name="Saunders D."/>
            <person name="Sodergren E.J."/>
            <person name="Davis P."/>
            <person name="Kerhornou A."/>
            <person name="Nie X."/>
            <person name="Hall N."/>
            <person name="Anjard C."/>
            <person name="Hemphill L."/>
            <person name="Bason N."/>
            <person name="Farbrother P."/>
            <person name="Desany B."/>
            <person name="Just E."/>
            <person name="Morio T."/>
            <person name="Rost R."/>
            <person name="Churcher C.M."/>
            <person name="Cooper J."/>
            <person name="Haydock S."/>
            <person name="van Driessche N."/>
            <person name="Cronin A."/>
            <person name="Goodhead I."/>
            <person name="Muzny D.M."/>
            <person name="Mourier T."/>
            <person name="Pain A."/>
            <person name="Lu M."/>
            <person name="Harper D."/>
            <person name="Lindsay R."/>
            <person name="Hauser H."/>
            <person name="James K.D."/>
            <person name="Quiles M."/>
            <person name="Madan Babu M."/>
            <person name="Saito T."/>
            <person name="Buchrieser C."/>
            <person name="Wardroper A."/>
            <person name="Felder M."/>
            <person name="Thangavelu M."/>
            <person name="Johnson D."/>
            <person name="Knights A."/>
            <person name="Loulseged H."/>
            <person name="Mungall K.L."/>
            <person name="Oliver K."/>
            <person name="Price C."/>
            <person name="Quail M.A."/>
            <person name="Urushihara H."/>
            <person name="Hernandez J."/>
            <person name="Rabbinowitsch E."/>
            <person name="Steffen D."/>
            <person name="Sanders M."/>
            <person name="Ma J."/>
            <person name="Kohara Y."/>
            <person name="Sharp S."/>
            <person name="Simmonds M.N."/>
            <person name="Spiegler S."/>
            <person name="Tivey A."/>
            <person name="Sugano S."/>
            <person name="White B."/>
            <person name="Walker D."/>
            <person name="Woodward J.R."/>
            <person name="Winckler T."/>
            <person name="Tanaka Y."/>
            <person name="Shaulsky G."/>
            <person name="Schleicher M."/>
            <person name="Weinstock G.M."/>
            <person name="Rosenthal A."/>
            <person name="Cox E.C."/>
            <person name="Chisholm R.L."/>
            <person name="Gibbs R.A."/>
            <person name="Loomis W.F."/>
            <person name="Platzer M."/>
            <person name="Kay R.R."/>
            <person name="Williams J.G."/>
            <person name="Dear P.H."/>
            <person name="Noegel A.A."/>
            <person name="Barrell B.G."/>
            <person name="Kuspa A."/>
        </authorList>
    </citation>
    <scope>NUCLEOTIDE SEQUENCE [LARGE SCALE GENOMIC DNA]</scope>
    <source>
        <strain>AX4</strain>
    </source>
</reference>
<evidence type="ECO:0000255" key="1">
    <source>
        <dbReference type="HAMAP-Rule" id="MF_03037"/>
    </source>
</evidence>
<name>CIAO1_DICDI</name>
<proteinExistence type="inferred from homology"/>
<dbReference type="EMBL" id="AAFI02000005">
    <property type="protein sequence ID" value="EAL72214.1"/>
    <property type="molecule type" value="Genomic_DNA"/>
</dbReference>
<dbReference type="RefSeq" id="XP_646229.1">
    <property type="nucleotide sequence ID" value="XM_641137.1"/>
</dbReference>
<dbReference type="SMR" id="Q55DA2"/>
<dbReference type="FunCoup" id="Q55DA2">
    <property type="interactions" value="55"/>
</dbReference>
<dbReference type="STRING" id="44689.Q55DA2"/>
<dbReference type="PaxDb" id="44689-DDB0266672"/>
<dbReference type="EnsemblProtists" id="EAL72214">
    <property type="protein sequence ID" value="EAL72214"/>
    <property type="gene ID" value="DDB_G0269728"/>
</dbReference>
<dbReference type="GeneID" id="8617183"/>
<dbReference type="KEGG" id="ddi:DDB_G0269728"/>
<dbReference type="dictyBase" id="DDB_G0269728">
    <property type="gene designation" value="ciao1"/>
</dbReference>
<dbReference type="VEuPathDB" id="AmoebaDB:DDB_G0269728"/>
<dbReference type="eggNOG" id="KOG0645">
    <property type="taxonomic scope" value="Eukaryota"/>
</dbReference>
<dbReference type="HOGENOM" id="CLU_000288_57_8_1"/>
<dbReference type="InParanoid" id="Q55DA2"/>
<dbReference type="OMA" id="IREIRWS"/>
<dbReference type="PhylomeDB" id="Q55DA2"/>
<dbReference type="PRO" id="PR:Q55DA2"/>
<dbReference type="Proteomes" id="UP000002195">
    <property type="component" value="Chromosome 1"/>
</dbReference>
<dbReference type="GO" id="GO:0097361">
    <property type="term" value="C:cytosolic [4Fe-4S] assembly targeting complex"/>
    <property type="evidence" value="ECO:0000318"/>
    <property type="project" value="GO_Central"/>
</dbReference>
<dbReference type="GO" id="GO:0016226">
    <property type="term" value="P:iron-sulfur cluster assembly"/>
    <property type="evidence" value="ECO:0000318"/>
    <property type="project" value="GO_Central"/>
</dbReference>
<dbReference type="GO" id="GO:0051604">
    <property type="term" value="P:protein maturation"/>
    <property type="evidence" value="ECO:0000250"/>
    <property type="project" value="UniProtKB"/>
</dbReference>
<dbReference type="CDD" id="cd00200">
    <property type="entry name" value="WD40"/>
    <property type="match status" value="1"/>
</dbReference>
<dbReference type="FunFam" id="2.130.10.10:FF:000136">
    <property type="entry name" value="Probable cytosolic iron-sulfur protein assembly protein CIAO1"/>
    <property type="match status" value="1"/>
</dbReference>
<dbReference type="Gene3D" id="2.130.10.10">
    <property type="entry name" value="YVTN repeat-like/Quinoprotein amine dehydrogenase"/>
    <property type="match status" value="1"/>
</dbReference>
<dbReference type="HAMAP" id="MF_03037">
    <property type="entry name" value="ciao1"/>
    <property type="match status" value="1"/>
</dbReference>
<dbReference type="InterPro" id="IPR028608">
    <property type="entry name" value="CIAO1/Cia1"/>
</dbReference>
<dbReference type="InterPro" id="IPR020472">
    <property type="entry name" value="G-protein_beta_WD-40_rep"/>
</dbReference>
<dbReference type="InterPro" id="IPR015943">
    <property type="entry name" value="WD40/YVTN_repeat-like_dom_sf"/>
</dbReference>
<dbReference type="InterPro" id="IPR019775">
    <property type="entry name" value="WD40_repeat_CS"/>
</dbReference>
<dbReference type="InterPro" id="IPR036322">
    <property type="entry name" value="WD40_repeat_dom_sf"/>
</dbReference>
<dbReference type="InterPro" id="IPR001680">
    <property type="entry name" value="WD40_rpt"/>
</dbReference>
<dbReference type="PANTHER" id="PTHR19920:SF0">
    <property type="entry name" value="CYTOSOLIC IRON-SULFUR PROTEIN ASSEMBLY PROTEIN CIAO1-RELATED"/>
    <property type="match status" value="1"/>
</dbReference>
<dbReference type="PANTHER" id="PTHR19920">
    <property type="entry name" value="WD40 PROTEIN CIAO1"/>
    <property type="match status" value="1"/>
</dbReference>
<dbReference type="Pfam" id="PF00400">
    <property type="entry name" value="WD40"/>
    <property type="match status" value="7"/>
</dbReference>
<dbReference type="PRINTS" id="PR00320">
    <property type="entry name" value="GPROTEINBRPT"/>
</dbReference>
<dbReference type="SMART" id="SM00320">
    <property type="entry name" value="WD40"/>
    <property type="match status" value="7"/>
</dbReference>
<dbReference type="SUPFAM" id="SSF50978">
    <property type="entry name" value="WD40 repeat-like"/>
    <property type="match status" value="1"/>
</dbReference>
<dbReference type="PROSITE" id="PS00678">
    <property type="entry name" value="WD_REPEATS_1"/>
    <property type="match status" value="1"/>
</dbReference>
<dbReference type="PROSITE" id="PS50082">
    <property type="entry name" value="WD_REPEATS_2"/>
    <property type="match status" value="6"/>
</dbReference>
<dbReference type="PROSITE" id="PS50294">
    <property type="entry name" value="WD_REPEATS_REGION"/>
    <property type="match status" value="1"/>
</dbReference>
<feature type="chain" id="PRO_0000330842" description="Probable cytosolic iron-sulfur protein assembly protein CIAO1 homolog">
    <location>
        <begin position="1"/>
        <end position="333"/>
    </location>
</feature>
<feature type="repeat" description="WD 1">
    <location>
        <begin position="22"/>
        <end position="61"/>
    </location>
</feature>
<feature type="repeat" description="WD 2">
    <location>
        <begin position="67"/>
        <end position="106"/>
    </location>
</feature>
<feature type="repeat" description="WD 3">
    <location>
        <begin position="113"/>
        <end position="152"/>
    </location>
</feature>
<feature type="repeat" description="WD 4">
    <location>
        <begin position="158"/>
        <end position="197"/>
    </location>
</feature>
<feature type="repeat" description="WD 5">
    <location>
        <begin position="202"/>
        <end position="241"/>
    </location>
</feature>
<feature type="repeat" description="WD 6">
    <location>
        <begin position="249"/>
        <end position="288"/>
    </location>
</feature>
<feature type="repeat" description="WD 7">
    <location>
        <begin position="298"/>
        <end position="333"/>
    </location>
</feature>
<gene>
    <name type="primary">ciao1</name>
    <name type="ORF">DDB_G0269728</name>
</gene>
<protein>
    <recommendedName>
        <fullName evidence="1">Probable cytosolic iron-sulfur protein assembly protein CIAO1 homolog</fullName>
    </recommendedName>
</protein>
<sequence length="333" mass="38366">MTDTTKNDKYNLKLIDSMQKEAPYDKVWNLAWHPNGEILATCANDKYIQIWSKDTNGKWGLVQSLEGHEKTVRRVAWSPCGRFLAGASFDASTSIWEKSKDELEFTHVSSLEGHTYEVKSVAWDSTGTLLATCSRDKSIWIWQMEDDNDFECLSINSGHGQDIKCVLWHPNEELLASSSYDDTIKFWKDIDGDWECINTLTGHESSIWDLAFNKDGDKLVSCGEDKLVLFWKFDKENEKWINIFKFKNENSRPIYSIDWSSLTNTIVTGSADDSIIFYEQESDDTPDKYKIILKKKNAHDSDVNCTKWNPKFKNILASCGDDGFIKIWELQDK</sequence>